<keyword id="KW-0067">ATP-binding</keyword>
<keyword id="KW-0418">Kinase</keyword>
<keyword id="KW-0547">Nucleotide-binding</keyword>
<keyword id="KW-1185">Reference proteome</keyword>
<keyword id="KW-0723">Serine/threonine-protein kinase</keyword>
<keyword id="KW-0808">Transferase</keyword>
<protein>
    <recommendedName>
        <fullName>Putative serine/threonine-protein kinase</fullName>
        <ecNumber>2.7.11.1</ecNumber>
    </recommendedName>
</protein>
<comment type="catalytic activity">
    <reaction>
        <text>L-seryl-[protein] + ATP = O-phospho-L-seryl-[protein] + ADP + H(+)</text>
        <dbReference type="Rhea" id="RHEA:17989"/>
        <dbReference type="Rhea" id="RHEA-COMP:9863"/>
        <dbReference type="Rhea" id="RHEA-COMP:11604"/>
        <dbReference type="ChEBI" id="CHEBI:15378"/>
        <dbReference type="ChEBI" id="CHEBI:29999"/>
        <dbReference type="ChEBI" id="CHEBI:30616"/>
        <dbReference type="ChEBI" id="CHEBI:83421"/>
        <dbReference type="ChEBI" id="CHEBI:456216"/>
        <dbReference type="EC" id="2.7.11.1"/>
    </reaction>
</comment>
<comment type="catalytic activity">
    <reaction>
        <text>L-threonyl-[protein] + ATP = O-phospho-L-threonyl-[protein] + ADP + H(+)</text>
        <dbReference type="Rhea" id="RHEA:46608"/>
        <dbReference type="Rhea" id="RHEA-COMP:11060"/>
        <dbReference type="Rhea" id="RHEA-COMP:11605"/>
        <dbReference type="ChEBI" id="CHEBI:15378"/>
        <dbReference type="ChEBI" id="CHEBI:30013"/>
        <dbReference type="ChEBI" id="CHEBI:30616"/>
        <dbReference type="ChEBI" id="CHEBI:61977"/>
        <dbReference type="ChEBI" id="CHEBI:456216"/>
        <dbReference type="EC" id="2.7.11.1"/>
    </reaction>
</comment>
<comment type="similarity">
    <text evidence="1">Belongs to the protein kinase superfamily. Ser/Thr protein kinase family.</text>
</comment>
<evidence type="ECO:0000255" key="1">
    <source>
        <dbReference type="PROSITE-ProRule" id="PRU00159"/>
    </source>
</evidence>
<evidence type="ECO:0000255" key="2">
    <source>
        <dbReference type="PROSITE-ProRule" id="PRU10027"/>
    </source>
</evidence>
<reference key="1">
    <citation type="journal article" date="1996" name="Nucleic Acids Res.">
        <title>Complete sequence analysis of the genome of the bacterium Mycoplasma pneumoniae.</title>
        <authorList>
            <person name="Himmelreich R."/>
            <person name="Hilbert H."/>
            <person name="Plagens H."/>
            <person name="Pirkl E."/>
            <person name="Li B.-C."/>
            <person name="Herrmann R."/>
        </authorList>
    </citation>
    <scope>NUCLEOTIDE SEQUENCE [LARGE SCALE GENOMIC DNA]</scope>
    <source>
        <strain>ATCC 29342 / M129 / Subtype 1</strain>
    </source>
</reference>
<accession>P75524</accession>
<feature type="chain" id="PRO_0000171202" description="Putative serine/threonine-protein kinase">
    <location>
        <begin position="1"/>
        <end position="389"/>
    </location>
</feature>
<feature type="domain" description="Protein kinase" evidence="1">
    <location>
        <begin position="15"/>
        <end position="356"/>
    </location>
</feature>
<feature type="active site" description="Proton acceptor" evidence="1 2">
    <location>
        <position position="164"/>
    </location>
</feature>
<gene>
    <name type="ordered locus">MPN_248</name>
    <name type="ORF">MP584</name>
</gene>
<organism>
    <name type="scientific">Mycoplasma pneumoniae (strain ATCC 29342 / M129 / Subtype 1)</name>
    <name type="common">Mycoplasmoides pneumoniae</name>
    <dbReference type="NCBI Taxonomy" id="272634"/>
    <lineage>
        <taxon>Bacteria</taxon>
        <taxon>Bacillati</taxon>
        <taxon>Mycoplasmatota</taxon>
        <taxon>Mycoplasmoidales</taxon>
        <taxon>Mycoplasmoidaceae</taxon>
        <taxon>Mycoplasmoides</taxon>
    </lineage>
</organism>
<proteinExistence type="inferred from homology"/>
<name>PKNS_MYCPN</name>
<sequence length="389" mass="44882">MALNLKIGDIVQNKYRIEKLINRGGMNSYLFLASNLHVQEFGPLQKRQFTRLVLKVVQRTDKINDNNWKKFLDGTITTTRVSHKNLVQTFDVVSPRLSVLSENQVIVLEDTVMIVMEYVDGPSLREMLNQKGYFSVQEVVYYFTKLVKVINYLHSFEHQIIHRDLKPENILFTSNLTDIKLLDFGIASAVIRNAEKTEVLTDENSLFGTVSYMTPEVLESTVNKEGKRIRKPPTVQYDIYSLGVILFEMLVGRVPFNKSIDPKKERETIQKARNFDVPLMGNLRSDVPVSLENIVFKCTAVKRENSKWMYSDTKQLLADLAQWQTEQTLIKPVHERILEGQNEMRELMVSNYLPWYLRKGVLIFFSVVLLALLIAVVSFFIITGVVVHS</sequence>
<dbReference type="EC" id="2.7.11.1"/>
<dbReference type="EMBL" id="U00089">
    <property type="protein sequence ID" value="AAB96232.1"/>
    <property type="molecule type" value="Genomic_DNA"/>
</dbReference>
<dbReference type="PIR" id="S73910">
    <property type="entry name" value="S73910"/>
</dbReference>
<dbReference type="RefSeq" id="NP_109936.1">
    <property type="nucleotide sequence ID" value="NC_000912.1"/>
</dbReference>
<dbReference type="RefSeq" id="WP_010874605.1">
    <property type="nucleotide sequence ID" value="NC_000912.1"/>
</dbReference>
<dbReference type="SMR" id="P75524"/>
<dbReference type="IntAct" id="P75524">
    <property type="interactions" value="1"/>
</dbReference>
<dbReference type="STRING" id="272634.MPN_248"/>
<dbReference type="EnsemblBacteria" id="AAB96232">
    <property type="protein sequence ID" value="AAB96232"/>
    <property type="gene ID" value="MPN_248"/>
</dbReference>
<dbReference type="KEGG" id="mpn:MPN_248"/>
<dbReference type="PATRIC" id="fig|272634.6.peg.267"/>
<dbReference type="HOGENOM" id="CLU_700090_0_0_14"/>
<dbReference type="OrthoDB" id="9788659at2"/>
<dbReference type="BioCyc" id="MPNE272634:G1GJ3-392-MONOMER"/>
<dbReference type="Proteomes" id="UP000000808">
    <property type="component" value="Chromosome"/>
</dbReference>
<dbReference type="GO" id="GO:0005524">
    <property type="term" value="F:ATP binding"/>
    <property type="evidence" value="ECO:0007669"/>
    <property type="project" value="UniProtKB-KW"/>
</dbReference>
<dbReference type="GO" id="GO:0106310">
    <property type="term" value="F:protein serine kinase activity"/>
    <property type="evidence" value="ECO:0007669"/>
    <property type="project" value="RHEA"/>
</dbReference>
<dbReference type="GO" id="GO:0004674">
    <property type="term" value="F:protein serine/threonine kinase activity"/>
    <property type="evidence" value="ECO:0007669"/>
    <property type="project" value="UniProtKB-KW"/>
</dbReference>
<dbReference type="CDD" id="cd14014">
    <property type="entry name" value="STKc_PknB_like"/>
    <property type="match status" value="1"/>
</dbReference>
<dbReference type="Gene3D" id="3.30.200.20">
    <property type="entry name" value="Phosphorylase Kinase, domain 1"/>
    <property type="match status" value="1"/>
</dbReference>
<dbReference type="Gene3D" id="1.10.510.10">
    <property type="entry name" value="Transferase(Phosphotransferase) domain 1"/>
    <property type="match status" value="1"/>
</dbReference>
<dbReference type="InterPro" id="IPR011009">
    <property type="entry name" value="Kinase-like_dom_sf"/>
</dbReference>
<dbReference type="InterPro" id="IPR000719">
    <property type="entry name" value="Prot_kinase_dom"/>
</dbReference>
<dbReference type="InterPro" id="IPR008271">
    <property type="entry name" value="Ser/Thr_kinase_AS"/>
</dbReference>
<dbReference type="PANTHER" id="PTHR24345:SF0">
    <property type="entry name" value="CELL CYCLE SERINE_THREONINE-PROTEIN KINASE CDC5_MSD2"/>
    <property type="match status" value="1"/>
</dbReference>
<dbReference type="PANTHER" id="PTHR24345">
    <property type="entry name" value="SERINE/THREONINE-PROTEIN KINASE PLK"/>
    <property type="match status" value="1"/>
</dbReference>
<dbReference type="Pfam" id="PF00069">
    <property type="entry name" value="Pkinase"/>
    <property type="match status" value="1"/>
</dbReference>
<dbReference type="SMART" id="SM00220">
    <property type="entry name" value="S_TKc"/>
    <property type="match status" value="1"/>
</dbReference>
<dbReference type="SUPFAM" id="SSF56112">
    <property type="entry name" value="Protein kinase-like (PK-like)"/>
    <property type="match status" value="1"/>
</dbReference>
<dbReference type="PROSITE" id="PS50011">
    <property type="entry name" value="PROTEIN_KINASE_DOM"/>
    <property type="match status" value="1"/>
</dbReference>
<dbReference type="PROSITE" id="PS00108">
    <property type="entry name" value="PROTEIN_KINASE_ST"/>
    <property type="match status" value="1"/>
</dbReference>